<comment type="function">
    <text evidence="1">F(1)F(0) ATP synthase produces ATP from ADP in the presence of a proton or sodium gradient. F-type ATPases consist of two structural domains, F(1) containing the extramembraneous catalytic core and F(0) containing the membrane proton channel, linked together by a central stalk and a peripheral stalk. During catalysis, ATP synthesis in the catalytic domain of F(1) is coupled via a rotary mechanism of the central stalk subunits to proton translocation.</text>
</comment>
<comment type="function">
    <text evidence="1">Component of the F(0) channel, it forms part of the peripheral stalk, linking F(1) to F(0). The b'-subunit is a diverged and duplicated form of b found in plants and photosynthetic bacteria.</text>
</comment>
<comment type="subunit">
    <text evidence="1">F-type ATPases have 2 components, F(1) - the catalytic core - and F(0) - the membrane proton channel. F(1) has five subunits: alpha(3), beta(3), gamma(1), delta(1), epsilon(1). F(0) has four main subunits: a(1), b(1), b'(1) and c(10-14). The alpha and beta chains form an alternating ring which encloses part of the gamma chain. F(1) is attached to F(0) by a central stalk formed by the gamma and epsilon chains, while a peripheral stalk is formed by the delta, b and b' chains.</text>
</comment>
<comment type="subcellular location">
    <subcellularLocation>
        <location evidence="1">Cellular thylakoid membrane</location>
        <topology evidence="1">Single-pass membrane protein</topology>
    </subcellularLocation>
</comment>
<comment type="similarity">
    <text evidence="1">Belongs to the ATPase B chain family.</text>
</comment>
<dbReference type="EMBL" id="CP000393">
    <property type="protein sequence ID" value="ABG51431.1"/>
    <property type="molecule type" value="Genomic_DNA"/>
</dbReference>
<dbReference type="RefSeq" id="WP_011611800.1">
    <property type="nucleotide sequence ID" value="NC_008312.1"/>
</dbReference>
<dbReference type="SMR" id="Q112Z3"/>
<dbReference type="STRING" id="203124.Tery_2202"/>
<dbReference type="KEGG" id="ter:Tery_2202"/>
<dbReference type="eggNOG" id="COG0711">
    <property type="taxonomic scope" value="Bacteria"/>
</dbReference>
<dbReference type="HOGENOM" id="CLU_079215_9_0_3"/>
<dbReference type="OrthoDB" id="426571at2"/>
<dbReference type="GO" id="GO:0031676">
    <property type="term" value="C:plasma membrane-derived thylakoid membrane"/>
    <property type="evidence" value="ECO:0007669"/>
    <property type="project" value="UniProtKB-SubCell"/>
</dbReference>
<dbReference type="GO" id="GO:0045259">
    <property type="term" value="C:proton-transporting ATP synthase complex"/>
    <property type="evidence" value="ECO:0007669"/>
    <property type="project" value="UniProtKB-KW"/>
</dbReference>
<dbReference type="GO" id="GO:0046933">
    <property type="term" value="F:proton-transporting ATP synthase activity, rotational mechanism"/>
    <property type="evidence" value="ECO:0007669"/>
    <property type="project" value="UniProtKB-UniRule"/>
</dbReference>
<dbReference type="GO" id="GO:0046961">
    <property type="term" value="F:proton-transporting ATPase activity, rotational mechanism"/>
    <property type="evidence" value="ECO:0007669"/>
    <property type="project" value="TreeGrafter"/>
</dbReference>
<dbReference type="CDD" id="cd06503">
    <property type="entry name" value="ATP-synt_Fo_b"/>
    <property type="match status" value="1"/>
</dbReference>
<dbReference type="HAMAP" id="MF_01398">
    <property type="entry name" value="ATP_synth_b_bprime"/>
    <property type="match status" value="1"/>
</dbReference>
<dbReference type="HAMAP" id="MF_01399">
    <property type="entry name" value="ATP_synth_bprime"/>
    <property type="match status" value="1"/>
</dbReference>
<dbReference type="InterPro" id="IPR034679">
    <property type="entry name" value="ATP_synth_b"/>
</dbReference>
<dbReference type="InterPro" id="IPR002146">
    <property type="entry name" value="ATP_synth_b/b'su_bac/chlpt"/>
</dbReference>
<dbReference type="InterPro" id="IPR050059">
    <property type="entry name" value="ATP_synthase_B_chain"/>
</dbReference>
<dbReference type="NCBIfam" id="NF005607">
    <property type="entry name" value="PRK07353.1"/>
    <property type="match status" value="1"/>
</dbReference>
<dbReference type="PANTHER" id="PTHR33445">
    <property type="entry name" value="ATP SYNTHASE SUBUNIT B', CHLOROPLASTIC"/>
    <property type="match status" value="1"/>
</dbReference>
<dbReference type="PANTHER" id="PTHR33445:SF2">
    <property type="entry name" value="ATP SYNTHASE SUBUNIT B', CHLOROPLASTIC"/>
    <property type="match status" value="1"/>
</dbReference>
<dbReference type="Pfam" id="PF00430">
    <property type="entry name" value="ATP-synt_B"/>
    <property type="match status" value="1"/>
</dbReference>
<sequence>MINLTIVLAVEEVAEKGGLFDINATLPLMAIQFLLLAFVLDKIFYKPLGKAIDSRADYIRENQVKAKERLAKAKQLAEQYEQEFAQTRQKSQVVIVAAQAEAEKIAATKVAVAQKEAQVKREQAAQEIEKQKEVALEQLEEQVDSLSRQILEKLLGPELVR</sequence>
<reference key="1">
    <citation type="journal article" date="2015" name="Proc. Natl. Acad. Sci. U.S.A.">
        <title>Trichodesmium genome maintains abundant, widespread noncoding DNA in situ, despite oligotrophic lifestyle.</title>
        <authorList>
            <person name="Walworth N."/>
            <person name="Pfreundt U."/>
            <person name="Nelson W.C."/>
            <person name="Mincer T."/>
            <person name="Heidelberg J.F."/>
            <person name="Fu F."/>
            <person name="Waterbury J.B."/>
            <person name="Glavina del Rio T."/>
            <person name="Goodwin L."/>
            <person name="Kyrpides N.C."/>
            <person name="Land M.L."/>
            <person name="Woyke T."/>
            <person name="Hutchins D.A."/>
            <person name="Hess W.R."/>
            <person name="Webb E.A."/>
        </authorList>
    </citation>
    <scope>NUCLEOTIDE SEQUENCE [LARGE SCALE GENOMIC DNA]</scope>
    <source>
        <strain>IMS101</strain>
    </source>
</reference>
<accession>Q112Z3</accession>
<gene>
    <name evidence="1" type="primary">atpF2</name>
    <name evidence="1" type="synonym">atpG</name>
    <name type="ordered locus">Tery_2202</name>
</gene>
<protein>
    <recommendedName>
        <fullName evidence="1">ATP synthase subunit b'</fullName>
    </recommendedName>
    <alternativeName>
        <fullName evidence="1">ATP synthase F(0) sector subunit b'</fullName>
    </alternativeName>
    <alternativeName>
        <fullName evidence="1">ATPase subunit II</fullName>
    </alternativeName>
    <alternativeName>
        <fullName evidence="1">F-type ATPase subunit b'</fullName>
        <shortName evidence="1">F-ATPase subunit b'</shortName>
    </alternativeName>
</protein>
<organism>
    <name type="scientific">Trichodesmium erythraeum (strain IMS101)</name>
    <dbReference type="NCBI Taxonomy" id="203124"/>
    <lineage>
        <taxon>Bacteria</taxon>
        <taxon>Bacillati</taxon>
        <taxon>Cyanobacteriota</taxon>
        <taxon>Cyanophyceae</taxon>
        <taxon>Oscillatoriophycideae</taxon>
        <taxon>Oscillatoriales</taxon>
        <taxon>Microcoleaceae</taxon>
        <taxon>Trichodesmium</taxon>
    </lineage>
</organism>
<feature type="chain" id="PRO_0000369057" description="ATP synthase subunit b'">
    <location>
        <begin position="1"/>
        <end position="161"/>
    </location>
</feature>
<feature type="transmembrane region" description="Helical" evidence="1">
    <location>
        <begin position="26"/>
        <end position="45"/>
    </location>
</feature>
<keyword id="KW-0066">ATP synthesis</keyword>
<keyword id="KW-0138">CF(0)</keyword>
<keyword id="KW-0375">Hydrogen ion transport</keyword>
<keyword id="KW-0406">Ion transport</keyword>
<keyword id="KW-0472">Membrane</keyword>
<keyword id="KW-0793">Thylakoid</keyword>
<keyword id="KW-0812">Transmembrane</keyword>
<keyword id="KW-1133">Transmembrane helix</keyword>
<keyword id="KW-0813">Transport</keyword>
<proteinExistence type="inferred from homology"/>
<name>ATPF2_TRIEI</name>
<evidence type="ECO:0000255" key="1">
    <source>
        <dbReference type="HAMAP-Rule" id="MF_01399"/>
    </source>
</evidence>